<evidence type="ECO:0000255" key="1">
    <source>
        <dbReference type="HAMAP-Rule" id="MF_01588"/>
    </source>
</evidence>
<proteinExistence type="inferred from homology"/>
<name>DNLJ_BORBU</name>
<reference key="1">
    <citation type="journal article" date="1997" name="Nature">
        <title>Genomic sequence of a Lyme disease spirochaete, Borrelia burgdorferi.</title>
        <authorList>
            <person name="Fraser C.M."/>
            <person name="Casjens S."/>
            <person name="Huang W.M."/>
            <person name="Sutton G.G."/>
            <person name="Clayton R.A."/>
            <person name="Lathigra R."/>
            <person name="White O."/>
            <person name="Ketchum K.A."/>
            <person name="Dodson R.J."/>
            <person name="Hickey E.K."/>
            <person name="Gwinn M.L."/>
            <person name="Dougherty B.A."/>
            <person name="Tomb J.-F."/>
            <person name="Fleischmann R.D."/>
            <person name="Richardson D.L."/>
            <person name="Peterson J.D."/>
            <person name="Kerlavage A.R."/>
            <person name="Quackenbush J."/>
            <person name="Salzberg S.L."/>
            <person name="Hanson M."/>
            <person name="van Vugt R."/>
            <person name="Palmer N."/>
            <person name="Adams M.D."/>
            <person name="Gocayne J.D."/>
            <person name="Weidman J.F."/>
            <person name="Utterback T.R."/>
            <person name="Watthey L."/>
            <person name="McDonald L.A."/>
            <person name="Artiach P."/>
            <person name="Bowman C."/>
            <person name="Garland S.A."/>
            <person name="Fujii C."/>
            <person name="Cotton M.D."/>
            <person name="Horst K."/>
            <person name="Roberts K.M."/>
            <person name="Hatch B."/>
            <person name="Smith H.O."/>
            <person name="Venter J.C."/>
        </authorList>
    </citation>
    <scope>NUCLEOTIDE SEQUENCE [LARGE SCALE GENOMIC DNA]</scope>
    <source>
        <strain>ATCC 35210 / DSM 4680 / CIP 102532 / B31</strain>
    </source>
</reference>
<keyword id="KW-0227">DNA damage</keyword>
<keyword id="KW-0234">DNA repair</keyword>
<keyword id="KW-0235">DNA replication</keyword>
<keyword id="KW-0436">Ligase</keyword>
<keyword id="KW-0460">Magnesium</keyword>
<keyword id="KW-0464">Manganese</keyword>
<keyword id="KW-0479">Metal-binding</keyword>
<keyword id="KW-0520">NAD</keyword>
<keyword id="KW-1185">Reference proteome</keyword>
<keyword id="KW-0862">Zinc</keyword>
<dbReference type="EC" id="6.5.1.2" evidence="1"/>
<dbReference type="EMBL" id="AE000783">
    <property type="protein sequence ID" value="AAC66923.1"/>
    <property type="molecule type" value="Genomic_DNA"/>
</dbReference>
<dbReference type="PIR" id="G70168">
    <property type="entry name" value="G70168"/>
</dbReference>
<dbReference type="RefSeq" id="NP_212686.1">
    <property type="nucleotide sequence ID" value="NC_001318.1"/>
</dbReference>
<dbReference type="RefSeq" id="WP_010889764.1">
    <property type="nucleotide sequence ID" value="NC_001318.1"/>
</dbReference>
<dbReference type="SMR" id="O51502"/>
<dbReference type="STRING" id="224326.BB_0552"/>
<dbReference type="PaxDb" id="224326-BB_0552"/>
<dbReference type="EnsemblBacteria" id="AAC66923">
    <property type="protein sequence ID" value="AAC66923"/>
    <property type="gene ID" value="BB_0552"/>
</dbReference>
<dbReference type="KEGG" id="bbu:BB_0552"/>
<dbReference type="PATRIC" id="fig|224326.49.peg.943"/>
<dbReference type="HOGENOM" id="CLU_007764_2_1_12"/>
<dbReference type="OrthoDB" id="9759736at2"/>
<dbReference type="Proteomes" id="UP000001807">
    <property type="component" value="Chromosome"/>
</dbReference>
<dbReference type="GO" id="GO:0003677">
    <property type="term" value="F:DNA binding"/>
    <property type="evidence" value="ECO:0007669"/>
    <property type="project" value="InterPro"/>
</dbReference>
<dbReference type="GO" id="GO:0003911">
    <property type="term" value="F:DNA ligase (NAD+) activity"/>
    <property type="evidence" value="ECO:0007669"/>
    <property type="project" value="UniProtKB-UniRule"/>
</dbReference>
<dbReference type="GO" id="GO:0046872">
    <property type="term" value="F:metal ion binding"/>
    <property type="evidence" value="ECO:0007669"/>
    <property type="project" value="UniProtKB-KW"/>
</dbReference>
<dbReference type="GO" id="GO:0006281">
    <property type="term" value="P:DNA repair"/>
    <property type="evidence" value="ECO:0007669"/>
    <property type="project" value="UniProtKB-KW"/>
</dbReference>
<dbReference type="GO" id="GO:0006260">
    <property type="term" value="P:DNA replication"/>
    <property type="evidence" value="ECO:0007669"/>
    <property type="project" value="UniProtKB-KW"/>
</dbReference>
<dbReference type="CDD" id="cd17748">
    <property type="entry name" value="BRCT_DNA_ligase_like"/>
    <property type="match status" value="1"/>
</dbReference>
<dbReference type="CDD" id="cd00114">
    <property type="entry name" value="LIGANc"/>
    <property type="match status" value="1"/>
</dbReference>
<dbReference type="Gene3D" id="1.10.150.20">
    <property type="entry name" value="5' to 3' exonuclease, C-terminal subdomain"/>
    <property type="match status" value="2"/>
</dbReference>
<dbReference type="Gene3D" id="3.40.50.10190">
    <property type="entry name" value="BRCT domain"/>
    <property type="match status" value="1"/>
</dbReference>
<dbReference type="Gene3D" id="3.30.470.30">
    <property type="entry name" value="DNA ligase/mRNA capping enzyme"/>
    <property type="match status" value="1"/>
</dbReference>
<dbReference type="Gene3D" id="1.10.287.610">
    <property type="entry name" value="Helix hairpin bin"/>
    <property type="match status" value="1"/>
</dbReference>
<dbReference type="Gene3D" id="2.40.50.140">
    <property type="entry name" value="Nucleic acid-binding proteins"/>
    <property type="match status" value="1"/>
</dbReference>
<dbReference type="HAMAP" id="MF_01588">
    <property type="entry name" value="DNA_ligase_A"/>
    <property type="match status" value="1"/>
</dbReference>
<dbReference type="InterPro" id="IPR001357">
    <property type="entry name" value="BRCT_dom"/>
</dbReference>
<dbReference type="InterPro" id="IPR036420">
    <property type="entry name" value="BRCT_dom_sf"/>
</dbReference>
<dbReference type="InterPro" id="IPR001679">
    <property type="entry name" value="DNA_ligase"/>
</dbReference>
<dbReference type="InterPro" id="IPR013839">
    <property type="entry name" value="DNAligase_adenylation"/>
</dbReference>
<dbReference type="InterPro" id="IPR013840">
    <property type="entry name" value="DNAligase_N"/>
</dbReference>
<dbReference type="InterPro" id="IPR003583">
    <property type="entry name" value="Hlx-hairpin-Hlx_DNA-bd_motif"/>
</dbReference>
<dbReference type="InterPro" id="IPR012340">
    <property type="entry name" value="NA-bd_OB-fold"/>
</dbReference>
<dbReference type="InterPro" id="IPR004150">
    <property type="entry name" value="NAD_DNA_ligase_OB"/>
</dbReference>
<dbReference type="InterPro" id="IPR010994">
    <property type="entry name" value="RuvA_2-like"/>
</dbReference>
<dbReference type="NCBIfam" id="TIGR00575">
    <property type="entry name" value="dnlj"/>
    <property type="match status" value="1"/>
</dbReference>
<dbReference type="NCBIfam" id="NF005932">
    <property type="entry name" value="PRK07956.1"/>
    <property type="match status" value="1"/>
</dbReference>
<dbReference type="NCBIfam" id="NF010930">
    <property type="entry name" value="PRK14350.1"/>
    <property type="match status" value="1"/>
</dbReference>
<dbReference type="Pfam" id="PF00533">
    <property type="entry name" value="BRCT"/>
    <property type="match status" value="1"/>
</dbReference>
<dbReference type="Pfam" id="PF01653">
    <property type="entry name" value="DNA_ligase_aden"/>
    <property type="match status" value="1"/>
</dbReference>
<dbReference type="Pfam" id="PF03120">
    <property type="entry name" value="DNA_ligase_OB"/>
    <property type="match status" value="1"/>
</dbReference>
<dbReference type="PIRSF" id="PIRSF001604">
    <property type="entry name" value="LigA"/>
    <property type="match status" value="1"/>
</dbReference>
<dbReference type="SMART" id="SM00292">
    <property type="entry name" value="BRCT"/>
    <property type="match status" value="1"/>
</dbReference>
<dbReference type="SMART" id="SM00278">
    <property type="entry name" value="HhH1"/>
    <property type="match status" value="3"/>
</dbReference>
<dbReference type="SMART" id="SM00532">
    <property type="entry name" value="LIGANc"/>
    <property type="match status" value="1"/>
</dbReference>
<dbReference type="SUPFAM" id="SSF52113">
    <property type="entry name" value="BRCT domain"/>
    <property type="match status" value="1"/>
</dbReference>
<dbReference type="SUPFAM" id="SSF56091">
    <property type="entry name" value="DNA ligase/mRNA capping enzyme, catalytic domain"/>
    <property type="match status" value="1"/>
</dbReference>
<dbReference type="SUPFAM" id="SSF50249">
    <property type="entry name" value="Nucleic acid-binding proteins"/>
    <property type="match status" value="1"/>
</dbReference>
<dbReference type="SUPFAM" id="SSF47781">
    <property type="entry name" value="RuvA domain 2-like"/>
    <property type="match status" value="1"/>
</dbReference>
<dbReference type="PROSITE" id="PS50172">
    <property type="entry name" value="BRCT"/>
    <property type="match status" value="1"/>
</dbReference>
<organism>
    <name type="scientific">Borreliella burgdorferi (strain ATCC 35210 / DSM 4680 / CIP 102532 / B31)</name>
    <name type="common">Borrelia burgdorferi</name>
    <dbReference type="NCBI Taxonomy" id="224326"/>
    <lineage>
        <taxon>Bacteria</taxon>
        <taxon>Pseudomonadati</taxon>
        <taxon>Spirochaetota</taxon>
        <taxon>Spirochaetia</taxon>
        <taxon>Spirochaetales</taxon>
        <taxon>Borreliaceae</taxon>
        <taxon>Borreliella</taxon>
    </lineage>
</organism>
<comment type="function">
    <text evidence="1">DNA ligase that catalyzes the formation of phosphodiester linkages between 5'-phosphoryl and 3'-hydroxyl groups in double-stranded DNA using NAD as a coenzyme and as the energy source for the reaction. It is essential for DNA replication and repair of damaged DNA.</text>
</comment>
<comment type="catalytic activity">
    <reaction evidence="1">
        <text>NAD(+) + (deoxyribonucleotide)n-3'-hydroxyl + 5'-phospho-(deoxyribonucleotide)m = (deoxyribonucleotide)n+m + AMP + beta-nicotinamide D-nucleotide.</text>
        <dbReference type="EC" id="6.5.1.2"/>
    </reaction>
</comment>
<comment type="cofactor">
    <cofactor evidence="1">
        <name>Mg(2+)</name>
        <dbReference type="ChEBI" id="CHEBI:18420"/>
    </cofactor>
    <cofactor evidence="1">
        <name>Mn(2+)</name>
        <dbReference type="ChEBI" id="CHEBI:29035"/>
    </cofactor>
</comment>
<comment type="similarity">
    <text evidence="1">Belongs to the NAD-dependent DNA ligase family. LigA subfamily.</text>
</comment>
<feature type="chain" id="PRO_0000161739" description="DNA ligase">
    <location>
        <begin position="1"/>
        <end position="660"/>
    </location>
</feature>
<feature type="domain" description="BRCT" evidence="1">
    <location>
        <begin position="583"/>
        <end position="660"/>
    </location>
</feature>
<feature type="active site" description="N6-AMP-lysine intermediate" evidence="1">
    <location>
        <position position="112"/>
    </location>
</feature>
<feature type="binding site" evidence="1">
    <location>
        <begin position="33"/>
        <end position="37"/>
    </location>
    <ligand>
        <name>NAD(+)</name>
        <dbReference type="ChEBI" id="CHEBI:57540"/>
    </ligand>
</feature>
<feature type="binding site" evidence="1">
    <location>
        <begin position="82"/>
        <end position="83"/>
    </location>
    <ligand>
        <name>NAD(+)</name>
        <dbReference type="ChEBI" id="CHEBI:57540"/>
    </ligand>
</feature>
<feature type="binding site" evidence="1">
    <location>
        <position position="110"/>
    </location>
    <ligand>
        <name>NAD(+)</name>
        <dbReference type="ChEBI" id="CHEBI:57540"/>
    </ligand>
</feature>
<feature type="binding site" evidence="1">
    <location>
        <position position="133"/>
    </location>
    <ligand>
        <name>NAD(+)</name>
        <dbReference type="ChEBI" id="CHEBI:57540"/>
    </ligand>
</feature>
<feature type="binding site" evidence="1">
    <location>
        <position position="167"/>
    </location>
    <ligand>
        <name>NAD(+)</name>
        <dbReference type="ChEBI" id="CHEBI:57540"/>
    </ligand>
</feature>
<feature type="binding site" evidence="1">
    <location>
        <position position="281"/>
    </location>
    <ligand>
        <name>NAD(+)</name>
        <dbReference type="ChEBI" id="CHEBI:57540"/>
    </ligand>
</feature>
<feature type="binding site" evidence="1">
    <location>
        <position position="305"/>
    </location>
    <ligand>
        <name>NAD(+)</name>
        <dbReference type="ChEBI" id="CHEBI:57540"/>
    </ligand>
</feature>
<feature type="binding site" evidence="1">
    <location>
        <position position="396"/>
    </location>
    <ligand>
        <name>Zn(2+)</name>
        <dbReference type="ChEBI" id="CHEBI:29105"/>
    </ligand>
</feature>
<feature type="binding site" evidence="1">
    <location>
        <position position="399"/>
    </location>
    <ligand>
        <name>Zn(2+)</name>
        <dbReference type="ChEBI" id="CHEBI:29105"/>
    </ligand>
</feature>
<feature type="binding site" evidence="1">
    <location>
        <position position="412"/>
    </location>
    <ligand>
        <name>Zn(2+)</name>
        <dbReference type="ChEBI" id="CHEBI:29105"/>
    </ligand>
</feature>
<feature type="binding site" evidence="1">
    <location>
        <position position="417"/>
    </location>
    <ligand>
        <name>Zn(2+)</name>
        <dbReference type="ChEBI" id="CHEBI:29105"/>
    </ligand>
</feature>
<sequence>MSSKVQQEIADLKKLIRKWDKEYYVDSLPSVEDFVYDKHILRLQELESKYPEYKTLDSPTLKFGSDLLNDFKEVEHSAPILSLDKVYDLDLLKSWIDKIDFNNSFNISVEPKIDGCSIVLYYKDGVLEKALTRGNGKFGNDVTINVRTIRYIPLFLDEKVDLVLRGEVYITKENFLKINKFLEKPYTNSRNLASGILRRVDSREVANFPLNIFIYDFLNAGLEFKTNDLATARLKKLGFKVNPLIRFFDLKNSIGEVLNYIADITKKRDSFEYEIDGVVLKVSDFALRERLGYTAHHPKWAMAYKFEALSGFSRVNSIVVQVGRSGKITPVANIDKVFVSGAFITSATLHNQDYIRSIGLNVGDVVKVSRRGDVIPAVEMVINKFSTGFFKVPDNCPACKTAVVKEGAHFFCPNNNCPSVAVERIKYFCSKNCMDIEGFSDKIISFLFEKKFIFSEIDLYTFDFYKLLEFKGFKDRKINNLINSIEASKKKPFSKLLLSMGIKDLGENTIRLLFLNNLNSFSKLFKLCQDRYFAFSTLLKIKGIGEKIALNIIEAFNDSVMLNKFKFFENLEFKMEEVVAIDGENKLLAGKKFCITGTFNGYSRSIIIDKLKNKGAIFNTCVTGSLDFLIVGEKAGSKLKKALSLNIKIMSFEDIKSYLD</sequence>
<accession>O51502</accession>
<protein>
    <recommendedName>
        <fullName evidence="1">DNA ligase</fullName>
        <ecNumber evidence="1">6.5.1.2</ecNumber>
    </recommendedName>
    <alternativeName>
        <fullName evidence="1">Polydeoxyribonucleotide synthase [NAD(+)]</fullName>
    </alternativeName>
</protein>
<gene>
    <name evidence="1" type="primary">ligA</name>
    <name type="synonym">lig</name>
    <name type="ordered locus">BB_0552</name>
</gene>